<protein>
    <recommendedName>
        <fullName evidence="1">Small ribosomal subunit protein uS15</fullName>
    </recommendedName>
    <alternativeName>
        <fullName evidence="2">30S ribosomal protein S15</fullName>
    </alternativeName>
</protein>
<keyword id="KW-0687">Ribonucleoprotein</keyword>
<keyword id="KW-0689">Ribosomal protein</keyword>
<keyword id="KW-0694">RNA-binding</keyword>
<keyword id="KW-0699">rRNA-binding</keyword>
<proteinExistence type="inferred from homology"/>
<comment type="function">
    <text evidence="1">One of the primary rRNA binding proteins, it binds directly to 16S rRNA where it helps nucleate assembly of the platform of the 30S subunit by binding and bridging several RNA helices of the 16S rRNA.</text>
</comment>
<comment type="function">
    <text evidence="1">Forms an intersubunit bridge (bridge B4) with the 23S rRNA of the 50S subunit in the ribosome.</text>
</comment>
<comment type="subunit">
    <text evidence="1">Part of the 30S ribosomal subunit. Forms a bridge to the 50S subunit in the 70S ribosome, contacting the 23S rRNA.</text>
</comment>
<comment type="similarity">
    <text evidence="1">Belongs to the universal ribosomal protein uS15 family.</text>
</comment>
<name>RS15_METC4</name>
<sequence>MSITAERKTALIKDYAKGNKDTGSPEVQIAILTERITNLTAHFKTHGKDNHSRRGLLKLVSQRRSLLDYLKRKEEARYRTLIERLGIRR</sequence>
<evidence type="ECO:0000255" key="1">
    <source>
        <dbReference type="HAMAP-Rule" id="MF_01343"/>
    </source>
</evidence>
<evidence type="ECO:0000305" key="2"/>
<feature type="chain" id="PRO_1000166426" description="Small ribosomal subunit protein uS15">
    <location>
        <begin position="1"/>
        <end position="89"/>
    </location>
</feature>
<gene>
    <name evidence="1" type="primary">rpsO</name>
    <name type="ordered locus">Mchl_4397</name>
</gene>
<accession>B7KN56</accession>
<reference key="1">
    <citation type="submission" date="2008-12" db="EMBL/GenBank/DDBJ databases">
        <title>Complete sequence of chromosome of Methylobacterium chloromethanicum CM4.</title>
        <authorList>
            <consortium name="US DOE Joint Genome Institute"/>
            <person name="Lucas S."/>
            <person name="Copeland A."/>
            <person name="Lapidus A."/>
            <person name="Glavina del Rio T."/>
            <person name="Dalin E."/>
            <person name="Tice H."/>
            <person name="Bruce D."/>
            <person name="Goodwin L."/>
            <person name="Pitluck S."/>
            <person name="Chertkov O."/>
            <person name="Brettin T."/>
            <person name="Detter J.C."/>
            <person name="Han C."/>
            <person name="Larimer F."/>
            <person name="Land M."/>
            <person name="Hauser L."/>
            <person name="Kyrpides N."/>
            <person name="Mikhailova N."/>
            <person name="Marx C."/>
            <person name="Richardson P."/>
        </authorList>
    </citation>
    <scope>NUCLEOTIDE SEQUENCE [LARGE SCALE GENOMIC DNA]</scope>
    <source>
        <strain>CM4 / NCIMB 13688</strain>
    </source>
</reference>
<organism>
    <name type="scientific">Methylorubrum extorquens (strain CM4 / NCIMB 13688)</name>
    <name type="common">Methylobacterium extorquens</name>
    <dbReference type="NCBI Taxonomy" id="440085"/>
    <lineage>
        <taxon>Bacteria</taxon>
        <taxon>Pseudomonadati</taxon>
        <taxon>Pseudomonadota</taxon>
        <taxon>Alphaproteobacteria</taxon>
        <taxon>Hyphomicrobiales</taxon>
        <taxon>Methylobacteriaceae</taxon>
        <taxon>Methylorubrum</taxon>
    </lineage>
</organism>
<dbReference type="EMBL" id="CP001298">
    <property type="protein sequence ID" value="ACK85173.1"/>
    <property type="molecule type" value="Genomic_DNA"/>
</dbReference>
<dbReference type="RefSeq" id="WP_003597553.1">
    <property type="nucleotide sequence ID" value="NC_011757.1"/>
</dbReference>
<dbReference type="SMR" id="B7KN56"/>
<dbReference type="GeneID" id="72991745"/>
<dbReference type="KEGG" id="mch:Mchl_4397"/>
<dbReference type="HOGENOM" id="CLU_148518_0_0_5"/>
<dbReference type="Proteomes" id="UP000002385">
    <property type="component" value="Chromosome"/>
</dbReference>
<dbReference type="GO" id="GO:0022627">
    <property type="term" value="C:cytosolic small ribosomal subunit"/>
    <property type="evidence" value="ECO:0007669"/>
    <property type="project" value="TreeGrafter"/>
</dbReference>
<dbReference type="GO" id="GO:0019843">
    <property type="term" value="F:rRNA binding"/>
    <property type="evidence" value="ECO:0007669"/>
    <property type="project" value="UniProtKB-UniRule"/>
</dbReference>
<dbReference type="GO" id="GO:0003735">
    <property type="term" value="F:structural constituent of ribosome"/>
    <property type="evidence" value="ECO:0007669"/>
    <property type="project" value="InterPro"/>
</dbReference>
<dbReference type="GO" id="GO:0006412">
    <property type="term" value="P:translation"/>
    <property type="evidence" value="ECO:0007669"/>
    <property type="project" value="UniProtKB-UniRule"/>
</dbReference>
<dbReference type="CDD" id="cd00353">
    <property type="entry name" value="Ribosomal_S15p_S13e"/>
    <property type="match status" value="1"/>
</dbReference>
<dbReference type="FunFam" id="1.10.287.10:FF:000002">
    <property type="entry name" value="30S ribosomal protein S15"/>
    <property type="match status" value="1"/>
</dbReference>
<dbReference type="Gene3D" id="6.10.250.3130">
    <property type="match status" value="1"/>
</dbReference>
<dbReference type="Gene3D" id="1.10.287.10">
    <property type="entry name" value="S15/NS1, RNA-binding"/>
    <property type="match status" value="1"/>
</dbReference>
<dbReference type="HAMAP" id="MF_01343_B">
    <property type="entry name" value="Ribosomal_uS15_B"/>
    <property type="match status" value="1"/>
</dbReference>
<dbReference type="InterPro" id="IPR000589">
    <property type="entry name" value="Ribosomal_uS15"/>
</dbReference>
<dbReference type="InterPro" id="IPR005290">
    <property type="entry name" value="Ribosomal_uS15_bac-type"/>
</dbReference>
<dbReference type="InterPro" id="IPR009068">
    <property type="entry name" value="uS15_NS1_RNA-bd_sf"/>
</dbReference>
<dbReference type="NCBIfam" id="TIGR00952">
    <property type="entry name" value="S15_bact"/>
    <property type="match status" value="1"/>
</dbReference>
<dbReference type="PANTHER" id="PTHR23321">
    <property type="entry name" value="RIBOSOMAL PROTEIN S15, BACTERIAL AND ORGANELLAR"/>
    <property type="match status" value="1"/>
</dbReference>
<dbReference type="PANTHER" id="PTHR23321:SF26">
    <property type="entry name" value="SMALL RIBOSOMAL SUBUNIT PROTEIN US15M"/>
    <property type="match status" value="1"/>
</dbReference>
<dbReference type="Pfam" id="PF00312">
    <property type="entry name" value="Ribosomal_S15"/>
    <property type="match status" value="1"/>
</dbReference>
<dbReference type="SMART" id="SM01387">
    <property type="entry name" value="Ribosomal_S15"/>
    <property type="match status" value="1"/>
</dbReference>
<dbReference type="SUPFAM" id="SSF47060">
    <property type="entry name" value="S15/NS1 RNA-binding domain"/>
    <property type="match status" value="1"/>
</dbReference>
<dbReference type="PROSITE" id="PS00362">
    <property type="entry name" value="RIBOSOMAL_S15"/>
    <property type="match status" value="1"/>
</dbReference>